<feature type="chain" id="PRO_1000090240" description="Cobyric acid synthase">
    <location>
        <begin position="1"/>
        <end position="484"/>
    </location>
</feature>
<feature type="domain" description="GATase cobBQ-type" evidence="1">
    <location>
        <begin position="248"/>
        <end position="435"/>
    </location>
</feature>
<feature type="active site" description="Nucleophile" evidence="1">
    <location>
        <position position="329"/>
    </location>
</feature>
<feature type="active site" evidence="1">
    <location>
        <position position="427"/>
    </location>
</feature>
<protein>
    <recommendedName>
        <fullName evidence="1">Cobyric acid synthase</fullName>
    </recommendedName>
</protein>
<keyword id="KW-0169">Cobalamin biosynthesis</keyword>
<keyword id="KW-0315">Glutamine amidotransferase</keyword>
<proteinExistence type="inferred from homology"/>
<reference key="1">
    <citation type="submission" date="2008-02" db="EMBL/GenBank/DDBJ databases">
        <title>Complete sequence of Pseudomonas putida W619.</title>
        <authorList>
            <person name="Copeland A."/>
            <person name="Lucas S."/>
            <person name="Lapidus A."/>
            <person name="Barry K."/>
            <person name="Detter J.C."/>
            <person name="Glavina del Rio T."/>
            <person name="Dalin E."/>
            <person name="Tice H."/>
            <person name="Pitluck S."/>
            <person name="Chain P."/>
            <person name="Malfatti S."/>
            <person name="Shin M."/>
            <person name="Vergez L."/>
            <person name="Schmutz J."/>
            <person name="Larimer F."/>
            <person name="Land M."/>
            <person name="Hauser L."/>
            <person name="Kyrpides N."/>
            <person name="Kim E."/>
            <person name="Taghavi S."/>
            <person name="Vangronsveld D."/>
            <person name="van der Lelie D."/>
            <person name="Richardson P."/>
        </authorList>
    </citation>
    <scope>NUCLEOTIDE SEQUENCE [LARGE SCALE GENOMIC DNA]</scope>
    <source>
        <strain>W619</strain>
    </source>
</reference>
<gene>
    <name evidence="1" type="primary">cobQ</name>
    <name type="ordered locus">PputW619_1236</name>
</gene>
<accession>B1J1N6</accession>
<comment type="function">
    <text evidence="1">Catalyzes amidations at positions B, D, E, and G on adenosylcobyrinic A,C-diamide. NH(2) groups are provided by glutamine, and one molecule of ATP is hydrogenolyzed for each amidation.</text>
</comment>
<comment type="pathway">
    <text evidence="1">Cofactor biosynthesis; adenosylcobalamin biosynthesis.</text>
</comment>
<comment type="similarity">
    <text evidence="1">Belongs to the CobB/CobQ family. CobQ subfamily.</text>
</comment>
<name>COBQ_PSEPW</name>
<organism>
    <name type="scientific">Pseudomonas putida (strain W619)</name>
    <dbReference type="NCBI Taxonomy" id="390235"/>
    <lineage>
        <taxon>Bacteria</taxon>
        <taxon>Pseudomonadati</taxon>
        <taxon>Pseudomonadota</taxon>
        <taxon>Gammaproteobacteria</taxon>
        <taxon>Pseudomonadales</taxon>
        <taxon>Pseudomonadaceae</taxon>
        <taxon>Pseudomonas</taxon>
    </lineage>
</organism>
<evidence type="ECO:0000255" key="1">
    <source>
        <dbReference type="HAMAP-Rule" id="MF_00028"/>
    </source>
</evidence>
<dbReference type="EMBL" id="CP000949">
    <property type="protein sequence ID" value="ACA71741.1"/>
    <property type="molecule type" value="Genomic_DNA"/>
</dbReference>
<dbReference type="SMR" id="B1J1N6"/>
<dbReference type="STRING" id="390235.PputW619_1236"/>
<dbReference type="KEGG" id="ppw:PputW619_1236"/>
<dbReference type="eggNOG" id="COG1492">
    <property type="taxonomic scope" value="Bacteria"/>
</dbReference>
<dbReference type="HOGENOM" id="CLU_019250_2_0_6"/>
<dbReference type="OrthoDB" id="9808302at2"/>
<dbReference type="UniPathway" id="UPA00148"/>
<dbReference type="GO" id="GO:0015420">
    <property type="term" value="F:ABC-type vitamin B12 transporter activity"/>
    <property type="evidence" value="ECO:0007669"/>
    <property type="project" value="UniProtKB-UniRule"/>
</dbReference>
<dbReference type="GO" id="GO:0003824">
    <property type="term" value="F:catalytic activity"/>
    <property type="evidence" value="ECO:0007669"/>
    <property type="project" value="InterPro"/>
</dbReference>
<dbReference type="GO" id="GO:0009236">
    <property type="term" value="P:cobalamin biosynthetic process"/>
    <property type="evidence" value="ECO:0007669"/>
    <property type="project" value="UniProtKB-UniRule"/>
</dbReference>
<dbReference type="CDD" id="cd05389">
    <property type="entry name" value="CobQ_N"/>
    <property type="match status" value="1"/>
</dbReference>
<dbReference type="CDD" id="cd01750">
    <property type="entry name" value="GATase1_CobQ"/>
    <property type="match status" value="1"/>
</dbReference>
<dbReference type="Gene3D" id="3.40.50.880">
    <property type="match status" value="1"/>
</dbReference>
<dbReference type="Gene3D" id="3.40.50.300">
    <property type="entry name" value="P-loop containing nucleotide triphosphate hydrolases"/>
    <property type="match status" value="1"/>
</dbReference>
<dbReference type="HAMAP" id="MF_00028">
    <property type="entry name" value="CobQ"/>
    <property type="match status" value="1"/>
</dbReference>
<dbReference type="InterPro" id="IPR029062">
    <property type="entry name" value="Class_I_gatase-like"/>
</dbReference>
<dbReference type="InterPro" id="IPR002586">
    <property type="entry name" value="CobQ/CobB/MinD/ParA_Nub-bd_dom"/>
</dbReference>
<dbReference type="InterPro" id="IPR033949">
    <property type="entry name" value="CobQ_GATase1"/>
</dbReference>
<dbReference type="InterPro" id="IPR047045">
    <property type="entry name" value="CobQ_N"/>
</dbReference>
<dbReference type="InterPro" id="IPR004459">
    <property type="entry name" value="CobQ_synth"/>
</dbReference>
<dbReference type="InterPro" id="IPR011698">
    <property type="entry name" value="GATase_3"/>
</dbReference>
<dbReference type="InterPro" id="IPR027417">
    <property type="entry name" value="P-loop_NTPase"/>
</dbReference>
<dbReference type="NCBIfam" id="TIGR00313">
    <property type="entry name" value="cobQ"/>
    <property type="match status" value="1"/>
</dbReference>
<dbReference type="NCBIfam" id="NF001989">
    <property type="entry name" value="PRK00784.1"/>
    <property type="match status" value="1"/>
</dbReference>
<dbReference type="PANTHER" id="PTHR21343:SF1">
    <property type="entry name" value="COBYRIC ACID SYNTHASE"/>
    <property type="match status" value="1"/>
</dbReference>
<dbReference type="PANTHER" id="PTHR21343">
    <property type="entry name" value="DETHIOBIOTIN SYNTHETASE"/>
    <property type="match status" value="1"/>
</dbReference>
<dbReference type="Pfam" id="PF01656">
    <property type="entry name" value="CbiA"/>
    <property type="match status" value="1"/>
</dbReference>
<dbReference type="Pfam" id="PF07685">
    <property type="entry name" value="GATase_3"/>
    <property type="match status" value="1"/>
</dbReference>
<dbReference type="SUPFAM" id="SSF52317">
    <property type="entry name" value="Class I glutamine amidotransferase-like"/>
    <property type="match status" value="1"/>
</dbReference>
<dbReference type="SUPFAM" id="SSF52540">
    <property type="entry name" value="P-loop containing nucleoside triphosphate hydrolases"/>
    <property type="match status" value="1"/>
</dbReference>
<dbReference type="PROSITE" id="PS51274">
    <property type="entry name" value="GATASE_COBBQ"/>
    <property type="match status" value="1"/>
</dbReference>
<sequence length="484" mass="51631">MTTLMVQGTTSDAGKSTLVTALCRWLLRQGVAVVPFKPQNMALNSAVTADGGEIGRAQAVQAQACRLAPHTDMNPVLLKPNSDTGAQVIIHGRAVTSMNAVAYHDYKAIAMQAVLASHQRLSGEYPVVMVEGAGSPAEINLRAGDIANMGFAEAVDCPVILVADINRGGVFAHLVGTLELLSPTEQARVKGFVINRFRGDIALLQPGLDWLEQRTGKPVLGVLPYVTDLHLEAEDGIDVRQGAKDERVLKVIVPVLPRISNHTDFDPLRLHPQVDLQFIGPGQPIPPADLIILPGSKSVRGDLAQLRERGWDTAIARHLRYGGKLIGICGGLQMLGREVHDPLGLEGPAGSSPGLGLLDYATVLEAQKQLRNVAGALSLEQSPVAGYEIHAGVTQGPALQRPAVQLADGRSDGAISADGQILATYLHGLFEGSQSCAALLRWAGLADVQQIDYEALRERDIERLADLVEKHLDTAHLRKLCGVA</sequence>